<evidence type="ECO:0000255" key="1">
    <source>
        <dbReference type="HAMAP-Rule" id="MF_00346"/>
    </source>
</evidence>
<evidence type="ECO:0000305" key="2"/>
<accession>Q8Z3W5</accession>
<proteinExistence type="inferred from homology"/>
<gene>
    <name evidence="1" type="primary">ygfB</name>
    <name type="ordered locus">STY3215</name>
    <name type="ordered locus">t2977</name>
</gene>
<comment type="similarity">
    <text evidence="1">Belongs to the UPF0149 family.</text>
</comment>
<comment type="sequence caution" evidence="2">
    <conflict type="erroneous initiation">
        <sequence resource="EMBL-CDS" id="AAO70529"/>
    </conflict>
</comment>
<comment type="sequence caution" evidence="2">
    <conflict type="erroneous initiation">
        <sequence resource="EMBL-CDS" id="CAD02889"/>
    </conflict>
</comment>
<feature type="chain" id="PRO_0000207567" description="UPF0149 protein YgfB">
    <location>
        <begin position="1"/>
        <end position="192"/>
    </location>
</feature>
<organism>
    <name type="scientific">Salmonella typhi</name>
    <dbReference type="NCBI Taxonomy" id="90370"/>
    <lineage>
        <taxon>Bacteria</taxon>
        <taxon>Pseudomonadati</taxon>
        <taxon>Pseudomonadota</taxon>
        <taxon>Gammaproteobacteria</taxon>
        <taxon>Enterobacterales</taxon>
        <taxon>Enterobacteriaceae</taxon>
        <taxon>Salmonella</taxon>
    </lineage>
</organism>
<name>Y3215_SALTI</name>
<reference key="1">
    <citation type="journal article" date="2001" name="Nature">
        <title>Complete genome sequence of a multiple drug resistant Salmonella enterica serovar Typhi CT18.</title>
        <authorList>
            <person name="Parkhill J."/>
            <person name="Dougan G."/>
            <person name="James K.D."/>
            <person name="Thomson N.R."/>
            <person name="Pickard D."/>
            <person name="Wain J."/>
            <person name="Churcher C.M."/>
            <person name="Mungall K.L."/>
            <person name="Bentley S.D."/>
            <person name="Holden M.T.G."/>
            <person name="Sebaihia M."/>
            <person name="Baker S."/>
            <person name="Basham D."/>
            <person name="Brooks K."/>
            <person name="Chillingworth T."/>
            <person name="Connerton P."/>
            <person name="Cronin A."/>
            <person name="Davis P."/>
            <person name="Davies R.M."/>
            <person name="Dowd L."/>
            <person name="White N."/>
            <person name="Farrar J."/>
            <person name="Feltwell T."/>
            <person name="Hamlin N."/>
            <person name="Haque A."/>
            <person name="Hien T.T."/>
            <person name="Holroyd S."/>
            <person name="Jagels K."/>
            <person name="Krogh A."/>
            <person name="Larsen T.S."/>
            <person name="Leather S."/>
            <person name="Moule S."/>
            <person name="O'Gaora P."/>
            <person name="Parry C."/>
            <person name="Quail M.A."/>
            <person name="Rutherford K.M."/>
            <person name="Simmonds M."/>
            <person name="Skelton J."/>
            <person name="Stevens K."/>
            <person name="Whitehead S."/>
            <person name="Barrell B.G."/>
        </authorList>
    </citation>
    <scope>NUCLEOTIDE SEQUENCE [LARGE SCALE GENOMIC DNA]</scope>
    <source>
        <strain>CT18</strain>
    </source>
</reference>
<reference key="2">
    <citation type="journal article" date="2003" name="J. Bacteriol.">
        <title>Comparative genomics of Salmonella enterica serovar Typhi strains Ty2 and CT18.</title>
        <authorList>
            <person name="Deng W."/>
            <person name="Liou S.-R."/>
            <person name="Plunkett G. III"/>
            <person name="Mayhew G.F."/>
            <person name="Rose D.J."/>
            <person name="Burland V."/>
            <person name="Kodoyianni V."/>
            <person name="Schwartz D.C."/>
            <person name="Blattner F.R."/>
        </authorList>
    </citation>
    <scope>NUCLEOTIDE SEQUENCE [LARGE SCALE GENOMIC DNA]</scope>
    <source>
        <strain>ATCC 700931 / Ty2</strain>
    </source>
</reference>
<sequence length="192" mass="21258">MSIQNEMPGYDEMNRFLNQQGAGLTPAEMHGLISGMICGGNNDSSWQPLLHDLTNEGLAFGHELAQALRKMHAATSDALEDDGFLFQLYLPEGDDVSVFDRADALAGWVNHFLLGLGVTQPKLDKVTGETGEAIDDLRNIAQLGYDESEDQEELEMSLEEIIEYVRVAALLCHDTFTRQQPTAPEVRKPTLH</sequence>
<dbReference type="EMBL" id="AL513382">
    <property type="protein sequence ID" value="CAD02889.1"/>
    <property type="status" value="ALT_INIT"/>
    <property type="molecule type" value="Genomic_DNA"/>
</dbReference>
<dbReference type="EMBL" id="AE014613">
    <property type="protein sequence ID" value="AAO70529.1"/>
    <property type="status" value="ALT_INIT"/>
    <property type="molecule type" value="Genomic_DNA"/>
</dbReference>
<dbReference type="PIR" id="AI0873">
    <property type="entry name" value="AI0873"/>
</dbReference>
<dbReference type="RefSeq" id="NP_457457.3">
    <property type="nucleotide sequence ID" value="NC_003198.1"/>
</dbReference>
<dbReference type="SMR" id="Q8Z3W5"/>
<dbReference type="STRING" id="220341.gene:17587090"/>
<dbReference type="KEGG" id="stt:t2977"/>
<dbReference type="KEGG" id="sty:STY3215"/>
<dbReference type="PATRIC" id="fig|220341.7.peg.3276"/>
<dbReference type="eggNOG" id="COG3079">
    <property type="taxonomic scope" value="Bacteria"/>
</dbReference>
<dbReference type="HOGENOM" id="CLU_085336_1_0_6"/>
<dbReference type="OMA" id="WVNHFIS"/>
<dbReference type="OrthoDB" id="9783391at2"/>
<dbReference type="Proteomes" id="UP000000541">
    <property type="component" value="Chromosome"/>
</dbReference>
<dbReference type="Proteomes" id="UP000002670">
    <property type="component" value="Chromosome"/>
</dbReference>
<dbReference type="GO" id="GO:0005829">
    <property type="term" value="C:cytosol"/>
    <property type="evidence" value="ECO:0007669"/>
    <property type="project" value="TreeGrafter"/>
</dbReference>
<dbReference type="FunFam" id="1.20.120.740:FF:000001">
    <property type="entry name" value="UPF0149 protein YgfB"/>
    <property type="match status" value="1"/>
</dbReference>
<dbReference type="Gene3D" id="1.20.120.740">
    <property type="entry name" value="YgfB uncharacterised protein family UPF0149, PF03695"/>
    <property type="match status" value="1"/>
</dbReference>
<dbReference type="HAMAP" id="MF_00346">
    <property type="entry name" value="UPF0149"/>
    <property type="match status" value="1"/>
</dbReference>
<dbReference type="InterPro" id="IPR011978">
    <property type="entry name" value="YgfB-like"/>
</dbReference>
<dbReference type="InterPro" id="IPR036255">
    <property type="entry name" value="YgfB-like_sf"/>
</dbReference>
<dbReference type="NCBIfam" id="NF002477">
    <property type="entry name" value="PRK01736.1"/>
    <property type="match status" value="1"/>
</dbReference>
<dbReference type="NCBIfam" id="TIGR02292">
    <property type="entry name" value="ygfB_yecA"/>
    <property type="match status" value="1"/>
</dbReference>
<dbReference type="PANTHER" id="PTHR37528">
    <property type="entry name" value="UPF0149 PROTEIN YGFB"/>
    <property type="match status" value="1"/>
</dbReference>
<dbReference type="PANTHER" id="PTHR37528:SF1">
    <property type="entry name" value="UPF0149 PROTEIN YGFB"/>
    <property type="match status" value="1"/>
</dbReference>
<dbReference type="Pfam" id="PF03695">
    <property type="entry name" value="UPF0149"/>
    <property type="match status" value="1"/>
</dbReference>
<dbReference type="SUPFAM" id="SSF101327">
    <property type="entry name" value="YgfB-like"/>
    <property type="match status" value="1"/>
</dbReference>
<protein>
    <recommendedName>
        <fullName evidence="1">UPF0149 protein YgfB</fullName>
    </recommendedName>
</protein>